<evidence type="ECO:0000255" key="1">
    <source>
        <dbReference type="HAMAP-Rule" id="MF_01337"/>
    </source>
</evidence>
<evidence type="ECO:0000305" key="2"/>
<keyword id="KW-0687">Ribonucleoprotein</keyword>
<keyword id="KW-0689">Ribosomal protein</keyword>
<keyword id="KW-0694">RNA-binding</keyword>
<keyword id="KW-0699">rRNA-binding</keyword>
<dbReference type="EMBL" id="CP000527">
    <property type="protein sequence ID" value="ABM28766.1"/>
    <property type="molecule type" value="Genomic_DNA"/>
</dbReference>
<dbReference type="RefSeq" id="WP_010938614.1">
    <property type="nucleotide sequence ID" value="NC_008751.1"/>
</dbReference>
<dbReference type="SMR" id="A1VEA0"/>
<dbReference type="KEGG" id="dvl:Dvul_1749"/>
<dbReference type="HOGENOM" id="CLU_098841_0_1_7"/>
<dbReference type="Proteomes" id="UP000009173">
    <property type="component" value="Chromosome"/>
</dbReference>
<dbReference type="GO" id="GO:0022625">
    <property type="term" value="C:cytosolic large ribosomal subunit"/>
    <property type="evidence" value="ECO:0007669"/>
    <property type="project" value="TreeGrafter"/>
</dbReference>
<dbReference type="GO" id="GO:0008097">
    <property type="term" value="F:5S rRNA binding"/>
    <property type="evidence" value="ECO:0007669"/>
    <property type="project" value="TreeGrafter"/>
</dbReference>
<dbReference type="GO" id="GO:0003735">
    <property type="term" value="F:structural constituent of ribosome"/>
    <property type="evidence" value="ECO:0007669"/>
    <property type="project" value="InterPro"/>
</dbReference>
<dbReference type="GO" id="GO:0006412">
    <property type="term" value="P:translation"/>
    <property type="evidence" value="ECO:0007669"/>
    <property type="project" value="UniProtKB-UniRule"/>
</dbReference>
<dbReference type="CDD" id="cd00432">
    <property type="entry name" value="Ribosomal_L18_L5e"/>
    <property type="match status" value="1"/>
</dbReference>
<dbReference type="FunFam" id="3.30.420.100:FF:000001">
    <property type="entry name" value="50S ribosomal protein L18"/>
    <property type="match status" value="1"/>
</dbReference>
<dbReference type="Gene3D" id="3.30.420.100">
    <property type="match status" value="1"/>
</dbReference>
<dbReference type="HAMAP" id="MF_01337_B">
    <property type="entry name" value="Ribosomal_uL18_B"/>
    <property type="match status" value="1"/>
</dbReference>
<dbReference type="InterPro" id="IPR004389">
    <property type="entry name" value="Ribosomal_uL18_bac-type"/>
</dbReference>
<dbReference type="InterPro" id="IPR005484">
    <property type="entry name" value="Ribosomal_uL18_bac/euk"/>
</dbReference>
<dbReference type="NCBIfam" id="TIGR00060">
    <property type="entry name" value="L18_bact"/>
    <property type="match status" value="1"/>
</dbReference>
<dbReference type="PANTHER" id="PTHR12899">
    <property type="entry name" value="39S RIBOSOMAL PROTEIN L18, MITOCHONDRIAL"/>
    <property type="match status" value="1"/>
</dbReference>
<dbReference type="PANTHER" id="PTHR12899:SF3">
    <property type="entry name" value="LARGE RIBOSOMAL SUBUNIT PROTEIN UL18M"/>
    <property type="match status" value="1"/>
</dbReference>
<dbReference type="Pfam" id="PF00861">
    <property type="entry name" value="Ribosomal_L18p"/>
    <property type="match status" value="1"/>
</dbReference>
<dbReference type="SUPFAM" id="SSF53137">
    <property type="entry name" value="Translational machinery components"/>
    <property type="match status" value="1"/>
</dbReference>
<feature type="chain" id="PRO_1000053020" description="Large ribosomal subunit protein uL18">
    <location>
        <begin position="1"/>
        <end position="119"/>
    </location>
</feature>
<organism>
    <name type="scientific">Nitratidesulfovibrio vulgaris (strain DP4)</name>
    <name type="common">Desulfovibrio vulgaris</name>
    <dbReference type="NCBI Taxonomy" id="391774"/>
    <lineage>
        <taxon>Bacteria</taxon>
        <taxon>Pseudomonadati</taxon>
        <taxon>Thermodesulfobacteriota</taxon>
        <taxon>Desulfovibrionia</taxon>
        <taxon>Desulfovibrionales</taxon>
        <taxon>Desulfovibrionaceae</taxon>
        <taxon>Nitratidesulfovibrio</taxon>
    </lineage>
</organism>
<accession>A1VEA0</accession>
<gene>
    <name evidence="1" type="primary">rplR</name>
    <name type="ordered locus">Dvul_1749</name>
</gene>
<protein>
    <recommendedName>
        <fullName evidence="1">Large ribosomal subunit protein uL18</fullName>
    </recommendedName>
    <alternativeName>
        <fullName evidence="2">50S ribosomal protein L18</fullName>
    </alternativeName>
</protein>
<name>RL18_NITV4</name>
<reference key="1">
    <citation type="journal article" date="2009" name="Environ. Microbiol.">
        <title>Contribution of mobile genetic elements to Desulfovibrio vulgaris genome plasticity.</title>
        <authorList>
            <person name="Walker C.B."/>
            <person name="Stolyar S."/>
            <person name="Chivian D."/>
            <person name="Pinel N."/>
            <person name="Gabster J.A."/>
            <person name="Dehal P.S."/>
            <person name="He Z."/>
            <person name="Yang Z.K."/>
            <person name="Yen H.C."/>
            <person name="Zhou J."/>
            <person name="Wall J.D."/>
            <person name="Hazen T.C."/>
            <person name="Arkin A.P."/>
            <person name="Stahl D.A."/>
        </authorList>
    </citation>
    <scope>NUCLEOTIDE SEQUENCE [LARGE SCALE GENOMIC DNA]</scope>
    <source>
        <strain>DP4</strain>
    </source>
</reference>
<sequence length="119" mass="13270">MKFTKNEARLRRKVRIRKKISGTAERPRLVVYRSNLHIYAQIVDDTTGSTLVATSTLSISRTQEGVHANKAGAELVGKEIARLAKDKDIQSVVFDRNGYLYHGRIKAVADGAREAGLEF</sequence>
<proteinExistence type="inferred from homology"/>
<comment type="function">
    <text evidence="1">This is one of the proteins that bind and probably mediate the attachment of the 5S RNA into the large ribosomal subunit, where it forms part of the central protuberance.</text>
</comment>
<comment type="subunit">
    <text evidence="1">Part of the 50S ribosomal subunit; part of the 5S rRNA/L5/L18/L25 subcomplex. Contacts the 5S and 23S rRNAs.</text>
</comment>
<comment type="similarity">
    <text evidence="1">Belongs to the universal ribosomal protein uL18 family.</text>
</comment>